<feature type="propeptide" id="PRO_0000430547" evidence="5">
    <location>
        <begin position="1"/>
        <end position="4"/>
    </location>
</feature>
<feature type="chain" id="PRO_0000153646" description="Interleukin-36 beta">
    <location>
        <begin position="5"/>
        <end position="164"/>
    </location>
</feature>
<feature type="splice variant" id="VSP_002657" description="In isoform 2." evidence="9 10">
    <original>LQGSQDNIGKDTCWKLVGIHTCINLDVRESCFMGTLDQWGIGVGRKKWKSSFQHHHLRKKDKDFSSMRTNIGMPGRM</original>
    <variation>EKNIMDLYVEKKAQKPFLFFHNKEGSTSVFQSVSYPGWFIATSTTSGQPIFLTKERGITNNTNFYLDSVE</variation>
    <location>
        <begin position="88"/>
        <end position="164"/>
    </location>
</feature>
<feature type="sequence variant" id="VAR_025057" description="In dbSNP:rs34754959." evidence="8">
    <original>R</original>
    <variation>C</variation>
    <location>
        <position position="36"/>
    </location>
</feature>
<keyword id="KW-0025">Alternative splicing</keyword>
<keyword id="KW-0202">Cytokine</keyword>
<keyword id="KW-0963">Cytoplasm</keyword>
<keyword id="KW-0391">Immunity</keyword>
<keyword id="KW-0395">Inflammatory response</keyword>
<keyword id="KW-0399">Innate immunity</keyword>
<keyword id="KW-1267">Proteomics identification</keyword>
<keyword id="KW-1185">Reference proteome</keyword>
<keyword id="KW-0964">Secreted</keyword>
<sequence length="164" mass="18522">MNPQREAAPKSYAIRDSRQMVWVLSGNSLIAAPLSRSIKPVTLHLIACRDTEFSDKEKGNMVYLGIKGKDLCLFCAEIQGKPTLQLKLQGSQDNIGKDTCWKLVGIHTCINLDVRESCFMGTLDQWGIGVGRKKWKSSFQHHHLRKKDKDFSSMRTNIGMPGRM</sequence>
<evidence type="ECO:0000269" key="1">
    <source>
    </source>
</evidence>
<evidence type="ECO:0000269" key="2">
    <source>
    </source>
</evidence>
<evidence type="ECO:0000269" key="3">
    <source>
    </source>
</evidence>
<evidence type="ECO:0000269" key="4">
    <source>
    </source>
</evidence>
<evidence type="ECO:0000269" key="5">
    <source>
    </source>
</evidence>
<evidence type="ECO:0000269" key="6">
    <source>
    </source>
</evidence>
<evidence type="ECO:0000269" key="7">
    <source>
    </source>
</evidence>
<evidence type="ECO:0000269" key="8">
    <source ref="4"/>
</evidence>
<evidence type="ECO:0000303" key="9">
    <source>
    </source>
</evidence>
<evidence type="ECO:0000303" key="10">
    <source>
    </source>
</evidence>
<evidence type="ECO:0000305" key="11"/>
<evidence type="ECO:0000312" key="12">
    <source>
        <dbReference type="HGNC" id="HGNC:15564"/>
    </source>
</evidence>
<name>IL36B_HUMAN</name>
<protein>
    <recommendedName>
        <fullName>Interleukin-36 beta</fullName>
    </recommendedName>
    <alternativeName>
        <fullName>FIL1 eta</fullName>
    </alternativeName>
    <alternativeName>
        <fullName>Interleukin-1 eta</fullName>
        <shortName>IL-1 eta</shortName>
    </alternativeName>
    <alternativeName>
        <fullName>Interleukin-1 family member 8</fullName>
        <shortName>IL-1F8</shortName>
    </alternativeName>
    <alternativeName>
        <fullName>Interleukin-1 homolog 2</fullName>
        <shortName>IL-1H2</shortName>
    </alternativeName>
</protein>
<reference key="1">
    <citation type="journal article" date="2000" name="J. Biol. Chem.">
        <title>Identification and initial characterization of four novel members of the interleukin-1 family.</title>
        <authorList>
            <person name="Kumar S."/>
            <person name="McDonnell P.C."/>
            <person name="Lehr R."/>
            <person name="Tierney L."/>
            <person name="Tzimas M.N."/>
            <person name="Griswold D.E."/>
            <person name="Capper E.A."/>
            <person name="Tal-Singer R."/>
            <person name="Wells G.I."/>
            <person name="Doyle M.L."/>
            <person name="Young P.R."/>
        </authorList>
    </citation>
    <scope>NUCLEOTIDE SEQUENCE [MRNA] (ISOFORM 1)</scope>
    <source>
        <tissue>Osteoclastoma</tissue>
    </source>
</reference>
<reference key="2">
    <citation type="journal article" date="2000" name="J. Biol. Chem.">
        <title>Four new members expand the IL-1 superfamily.</title>
        <authorList>
            <person name="Smith D.E."/>
            <person name="Renshaw B.R."/>
            <person name="Ketchem R.R."/>
            <person name="Kubin M."/>
            <person name="Garka K.E."/>
            <person name="Sims J.E."/>
        </authorList>
    </citation>
    <scope>NUCLEOTIDE SEQUENCE [MRNA] (ISOFORM 2)</scope>
</reference>
<reference key="3">
    <citation type="journal article" date="2002" name="Genomics">
        <title>A sequence-based map of the nine genes of the human interleukin-1 cluster.</title>
        <authorList>
            <person name="Nicklin M.J.H."/>
            <person name="Barton J.L."/>
            <person name="Nguyen M."/>
            <person name="Fitzgerald M.G."/>
            <person name="Duff W.G."/>
            <person name="Kornman K."/>
        </authorList>
    </citation>
    <scope>NUCLEOTIDE SEQUENCE [GENOMIC DNA]</scope>
</reference>
<reference key="4">
    <citation type="submission" date="2005-09" db="EMBL/GenBank/DDBJ databases">
        <authorList>
            <consortium name="SeattleSNPs variation discovery resource"/>
        </authorList>
    </citation>
    <scope>NUCLEOTIDE SEQUENCE [GENOMIC DNA]</scope>
    <scope>VARIANT CYS-36</scope>
</reference>
<reference key="5">
    <citation type="journal article" date="2005" name="Nature">
        <title>Generation and annotation of the DNA sequences of human chromosomes 2 and 4.</title>
        <authorList>
            <person name="Hillier L.W."/>
            <person name="Graves T.A."/>
            <person name="Fulton R.S."/>
            <person name="Fulton L.A."/>
            <person name="Pepin K.H."/>
            <person name="Minx P."/>
            <person name="Wagner-McPherson C."/>
            <person name="Layman D."/>
            <person name="Wylie K."/>
            <person name="Sekhon M."/>
            <person name="Becker M.C."/>
            <person name="Fewell G.A."/>
            <person name="Delehaunty K.D."/>
            <person name="Miner T.L."/>
            <person name="Nash W.E."/>
            <person name="Kremitzki C."/>
            <person name="Oddy L."/>
            <person name="Du H."/>
            <person name="Sun H."/>
            <person name="Bradshaw-Cordum H."/>
            <person name="Ali J."/>
            <person name="Carter J."/>
            <person name="Cordes M."/>
            <person name="Harris A."/>
            <person name="Isak A."/>
            <person name="van Brunt A."/>
            <person name="Nguyen C."/>
            <person name="Du F."/>
            <person name="Courtney L."/>
            <person name="Kalicki J."/>
            <person name="Ozersky P."/>
            <person name="Abbott S."/>
            <person name="Armstrong J."/>
            <person name="Belter E.A."/>
            <person name="Caruso L."/>
            <person name="Cedroni M."/>
            <person name="Cotton M."/>
            <person name="Davidson T."/>
            <person name="Desai A."/>
            <person name="Elliott G."/>
            <person name="Erb T."/>
            <person name="Fronick C."/>
            <person name="Gaige T."/>
            <person name="Haakenson W."/>
            <person name="Haglund K."/>
            <person name="Holmes A."/>
            <person name="Harkins R."/>
            <person name="Kim K."/>
            <person name="Kruchowski S.S."/>
            <person name="Strong C.M."/>
            <person name="Grewal N."/>
            <person name="Goyea E."/>
            <person name="Hou S."/>
            <person name="Levy A."/>
            <person name="Martinka S."/>
            <person name="Mead K."/>
            <person name="McLellan M.D."/>
            <person name="Meyer R."/>
            <person name="Randall-Maher J."/>
            <person name="Tomlinson C."/>
            <person name="Dauphin-Kohlberg S."/>
            <person name="Kozlowicz-Reilly A."/>
            <person name="Shah N."/>
            <person name="Swearengen-Shahid S."/>
            <person name="Snider J."/>
            <person name="Strong J.T."/>
            <person name="Thompson J."/>
            <person name="Yoakum M."/>
            <person name="Leonard S."/>
            <person name="Pearman C."/>
            <person name="Trani L."/>
            <person name="Radionenko M."/>
            <person name="Waligorski J.E."/>
            <person name="Wang C."/>
            <person name="Rock S.M."/>
            <person name="Tin-Wollam A.-M."/>
            <person name="Maupin R."/>
            <person name="Latreille P."/>
            <person name="Wendl M.C."/>
            <person name="Yang S.-P."/>
            <person name="Pohl C."/>
            <person name="Wallis J.W."/>
            <person name="Spieth J."/>
            <person name="Bieri T.A."/>
            <person name="Berkowicz N."/>
            <person name="Nelson J.O."/>
            <person name="Osborne J."/>
            <person name="Ding L."/>
            <person name="Meyer R."/>
            <person name="Sabo A."/>
            <person name="Shotland Y."/>
            <person name="Sinha P."/>
            <person name="Wohldmann P.E."/>
            <person name="Cook L.L."/>
            <person name="Hickenbotham M.T."/>
            <person name="Eldred J."/>
            <person name="Williams D."/>
            <person name="Jones T.A."/>
            <person name="She X."/>
            <person name="Ciccarelli F.D."/>
            <person name="Izaurralde E."/>
            <person name="Taylor J."/>
            <person name="Schmutz J."/>
            <person name="Myers R.M."/>
            <person name="Cox D.R."/>
            <person name="Huang X."/>
            <person name="McPherson J.D."/>
            <person name="Mardis E.R."/>
            <person name="Clifton S.W."/>
            <person name="Warren W.C."/>
            <person name="Chinwalla A.T."/>
            <person name="Eddy S.R."/>
            <person name="Marra M.A."/>
            <person name="Ovcharenko I."/>
            <person name="Furey T.S."/>
            <person name="Miller W."/>
            <person name="Eichler E.E."/>
            <person name="Bork P."/>
            <person name="Suyama M."/>
            <person name="Torrents D."/>
            <person name="Waterston R.H."/>
            <person name="Wilson R.K."/>
        </authorList>
    </citation>
    <scope>NUCLEOTIDE SEQUENCE [LARGE SCALE GENOMIC DNA]</scope>
</reference>
<reference key="6">
    <citation type="submission" date="2005-07" db="EMBL/GenBank/DDBJ databases">
        <authorList>
            <person name="Mural R.J."/>
            <person name="Istrail S."/>
            <person name="Sutton G.G."/>
            <person name="Florea L."/>
            <person name="Halpern A.L."/>
            <person name="Mobarry C.M."/>
            <person name="Lippert R."/>
            <person name="Walenz B."/>
            <person name="Shatkay H."/>
            <person name="Dew I."/>
            <person name="Miller J.R."/>
            <person name="Flanigan M.J."/>
            <person name="Edwards N.J."/>
            <person name="Bolanos R."/>
            <person name="Fasulo D."/>
            <person name="Halldorsson B.V."/>
            <person name="Hannenhalli S."/>
            <person name="Turner R."/>
            <person name="Yooseph S."/>
            <person name="Lu F."/>
            <person name="Nusskern D.R."/>
            <person name="Shue B.C."/>
            <person name="Zheng X.H."/>
            <person name="Zhong F."/>
            <person name="Delcher A.L."/>
            <person name="Huson D.H."/>
            <person name="Kravitz S.A."/>
            <person name="Mouchard L."/>
            <person name="Reinert K."/>
            <person name="Remington K.A."/>
            <person name="Clark A.G."/>
            <person name="Waterman M.S."/>
            <person name="Eichler E.E."/>
            <person name="Adams M.D."/>
            <person name="Hunkapiller M.W."/>
            <person name="Myers E.W."/>
            <person name="Venter J.C."/>
        </authorList>
    </citation>
    <scope>NUCLEOTIDE SEQUENCE [LARGE SCALE GENOMIC DNA]</scope>
</reference>
<reference key="7">
    <citation type="journal article" date="2004" name="Genome Res.">
        <title>The status, quality, and expansion of the NIH full-length cDNA project: the Mammalian Gene Collection (MGC).</title>
        <authorList>
            <consortium name="The MGC Project Team"/>
        </authorList>
    </citation>
    <scope>NUCLEOTIDE SEQUENCE [LARGE SCALE MRNA] (ISOFORM 2)</scope>
    <source>
        <tissue>Lung</tissue>
        <tissue>Placenta</tissue>
    </source>
</reference>
<reference key="8">
    <citation type="journal article" date="2006" name="Arthritis Res. Ther.">
        <title>The new IL-1 family member IL-1F8 stimulates production of inflammatory mediators by synovial fibroblasts and articular chondrocytes.</title>
        <authorList>
            <person name="Magne D."/>
            <person name="Palmer G."/>
            <person name="Barton J.L."/>
            <person name="Mezin F."/>
            <person name="Talabot-Ayer D."/>
            <person name="Bas S."/>
            <person name="Duffy T."/>
            <person name="Noger M."/>
            <person name="Guerne P.A."/>
            <person name="Nicklin M.J."/>
            <person name="Gabay C."/>
        </authorList>
    </citation>
    <scope>FUNCTION</scope>
    <scope>INDUCTION</scope>
    <scope>SUBCELLULAR LOCATION</scope>
</reference>
<reference key="9">
    <citation type="journal article" date="2010" name="Obesity">
        <title>The effect of the interleukin-1 cytokine family members IL-1F6 and IL-1F8 on adipocyte differentiation.</title>
        <authorList>
            <person name="van Asseldonk E.J."/>
            <person name="Stienstra R."/>
            <person name="Koenen T.B."/>
            <person name="van Tits L.J."/>
            <person name="Joosten L.A."/>
            <person name="Tack C.J."/>
            <person name="Netea M.G."/>
        </authorList>
    </citation>
    <scope>FUNCTION</scope>
    <scope>TISSUE SPECIFICITY</scope>
</reference>
<reference key="10">
    <citation type="journal article" date="2011" name="J. Biol. Chem.">
        <title>Interleukin-36 (IL-36) ligands require processing for full agonist (IL-36alpha, IL-36beta, and IL-36gamma) or antagonist (IL-36Ra) activity.</title>
        <authorList>
            <person name="Towne J.E."/>
            <person name="Renshaw B.R."/>
            <person name="Douangpanya J."/>
            <person name="Lipsky B.P."/>
            <person name="Shen M."/>
            <person name="Gabel C.A."/>
            <person name="Sims J.E."/>
        </authorList>
    </citation>
    <scope>FUNCTION</scope>
    <scope>PROCESSING</scope>
</reference>
<reference key="11">
    <citation type="journal article" date="2011" name="J. Immunol.">
        <title>IL-1F5, -F6, -F8, and -F9: a novel IL-1 family signaling system that is active in psoriasis and promotes keratinocyte antimicrobial peptide expression.</title>
        <authorList>
            <person name="Johnston A."/>
            <person name="Xing X."/>
            <person name="Guzman A.M."/>
            <person name="Riblett M."/>
            <person name="Loyd C.M."/>
            <person name="Ward N.L."/>
            <person name="Wohn C."/>
            <person name="Prens E.P."/>
            <person name="Wang F."/>
            <person name="Maier L.E."/>
            <person name="Kang S."/>
            <person name="Voorhees J.J."/>
            <person name="Elder J.T."/>
            <person name="Gudjonsson J.E."/>
        </authorList>
    </citation>
    <scope>FUNCTION</scope>
    <scope>TISSUE SPECIFICITY</scope>
</reference>
<reference key="12">
    <citation type="journal article" date="2011" name="J. Invest. Dermatol.">
        <title>Inter-regulation of Th17 cytokines and the IL-36 cytokines in vitro and in vivo: implications in psoriasis pathogenesis.</title>
        <authorList>
            <person name="Carrier Y."/>
            <person name="Ma H.L."/>
            <person name="Ramon H.E."/>
            <person name="Napierata L."/>
            <person name="Small C."/>
            <person name="O'Toole M."/>
            <person name="Young D.A."/>
            <person name="Fouser L.A."/>
            <person name="Nickerson-Nutter C."/>
            <person name="Collins M."/>
            <person name="Dunussi-Joannopoulos K."/>
            <person name="Medley Q.G."/>
        </authorList>
    </citation>
    <scope>FUNCTION</scope>
</reference>
<reference key="13">
    <citation type="journal article" date="2014" name="J. Immunol.">
        <title>IL-36 promotes myeloid cell infiltration, activation, and inflammatory activity in skin.</title>
        <authorList>
            <person name="Foster A.M."/>
            <person name="Baliwag J."/>
            <person name="Chen C.S."/>
            <person name="Guzman A.M."/>
            <person name="Stoll S.W."/>
            <person name="Gudjonsson J.E."/>
            <person name="Ward N.L."/>
            <person name="Johnston A."/>
        </authorList>
    </citation>
    <scope>FUNCTION</scope>
</reference>
<reference key="14">
    <citation type="journal article" date="2020" name="Cell">
        <title>A Translocation Pathway for Vesicle-Mediated Unconventional Protein Secretion.</title>
        <authorList>
            <person name="Zhang M."/>
            <person name="Liu L."/>
            <person name="Lin X."/>
            <person name="Wang Y."/>
            <person name="Li Y."/>
            <person name="Guo Q."/>
            <person name="Li S."/>
            <person name="Sun Y."/>
            <person name="Tao X."/>
            <person name="Zhang D."/>
            <person name="Lv X."/>
            <person name="Zheng L."/>
            <person name="Ge L."/>
        </authorList>
    </citation>
    <scope>SUBCELLULAR LOCATION</scope>
    <scope>INTERACTION WITH TMED10</scope>
</reference>
<gene>
    <name evidence="12" type="primary">IL36B</name>
    <name type="synonym">IL1F8</name>
    <name type="synonym">IL1H2</name>
</gene>
<proteinExistence type="evidence at protein level"/>
<accession>Q9NZH7</accession>
<accession>Q3MIH0</accession>
<accession>Q53SR6</accession>
<accession>Q7RTZ7</accession>
<accession>Q9UHA5</accession>
<dbReference type="EMBL" id="AF200494">
    <property type="protein sequence ID" value="AAF69250.1"/>
    <property type="molecule type" value="mRNA"/>
</dbReference>
<dbReference type="EMBL" id="AF201833">
    <property type="protein sequence ID" value="AAF25213.1"/>
    <property type="molecule type" value="mRNA"/>
</dbReference>
<dbReference type="EMBL" id="CH471217">
    <property type="protein sequence ID" value="EAW73615.1"/>
    <property type="molecule type" value="Genomic_DNA"/>
</dbReference>
<dbReference type="EMBL" id="BC101831">
    <property type="protein sequence ID" value="AAI01832.1"/>
    <property type="molecule type" value="mRNA"/>
</dbReference>
<dbReference type="EMBL" id="BC101833">
    <property type="protein sequence ID" value="AAI01834.1"/>
    <property type="molecule type" value="mRNA"/>
</dbReference>
<dbReference type="EMBL" id="BN000002">
    <property type="protein sequence ID" value="CAD29876.1"/>
    <property type="molecule type" value="Genomic_DNA"/>
</dbReference>
<dbReference type="EMBL" id="DQ224343">
    <property type="protein sequence ID" value="ABA60896.1"/>
    <property type="molecule type" value="Genomic_DNA"/>
</dbReference>
<dbReference type="EMBL" id="AC016724">
    <property type="protein sequence ID" value="AAY14989.1"/>
    <property type="molecule type" value="Genomic_DNA"/>
</dbReference>
<dbReference type="CCDS" id="CCDS2109.1">
    <molecule id="Q9NZH7-1"/>
</dbReference>
<dbReference type="CCDS" id="CCDS2110.1">
    <molecule id="Q9NZH7-2"/>
</dbReference>
<dbReference type="RefSeq" id="NP_055253.2">
    <molecule id="Q9NZH7-1"/>
    <property type="nucleotide sequence ID" value="NM_014438.4"/>
</dbReference>
<dbReference type="RefSeq" id="NP_775270.1">
    <molecule id="Q9NZH7-2"/>
    <property type="nucleotide sequence ID" value="NM_173178.3"/>
</dbReference>
<dbReference type="RefSeq" id="XP_011509264.1">
    <molecule id="Q9NZH7-2"/>
    <property type="nucleotide sequence ID" value="XM_011510962.1"/>
</dbReference>
<dbReference type="RefSeq" id="XP_054197361.1">
    <molecule id="Q9NZH7-2"/>
    <property type="nucleotide sequence ID" value="XM_054341386.1"/>
</dbReference>
<dbReference type="SMR" id="Q9NZH7"/>
<dbReference type="BioGRID" id="118053">
    <property type="interactions" value="3"/>
</dbReference>
<dbReference type="ComplexPortal" id="CPX-10340">
    <property type="entry name" value="Interleukin-36B receptor ligand complex"/>
</dbReference>
<dbReference type="CORUM" id="Q9NZH7"/>
<dbReference type="FunCoup" id="Q9NZH7">
    <property type="interactions" value="294"/>
</dbReference>
<dbReference type="IntAct" id="Q9NZH7">
    <property type="interactions" value="2"/>
</dbReference>
<dbReference type="STRING" id="9606.ENSP00000259213"/>
<dbReference type="GlyGen" id="Q9NZH7">
    <property type="glycosylation" value="2 sites, 1 O-linked glycan (2 sites)"/>
</dbReference>
<dbReference type="iPTMnet" id="Q9NZH7"/>
<dbReference type="PhosphoSitePlus" id="Q9NZH7"/>
<dbReference type="BioMuta" id="IL36B"/>
<dbReference type="DMDM" id="25008595"/>
<dbReference type="MassIVE" id="Q9NZH7"/>
<dbReference type="PaxDb" id="9606-ENSP00000259213"/>
<dbReference type="PeptideAtlas" id="Q9NZH7"/>
<dbReference type="ProteomicsDB" id="83396">
    <molecule id="Q9NZH7-2"/>
</dbReference>
<dbReference type="Antibodypedia" id="33320">
    <property type="antibodies" value="212 antibodies from 30 providers"/>
</dbReference>
<dbReference type="DNASU" id="27177"/>
<dbReference type="Ensembl" id="ENST00000259213.9">
    <molecule id="Q9NZH7-1"/>
    <property type="protein sequence ID" value="ENSP00000259213.4"/>
    <property type="gene ID" value="ENSG00000136696.11"/>
</dbReference>
<dbReference type="Ensembl" id="ENST00000327407.2">
    <molecule id="Q9NZH7-2"/>
    <property type="protein sequence ID" value="ENSP00000328420.2"/>
    <property type="gene ID" value="ENSG00000136696.11"/>
</dbReference>
<dbReference type="GeneID" id="27177"/>
<dbReference type="KEGG" id="hsa:27177"/>
<dbReference type="MANE-Select" id="ENST00000327407.2">
    <molecule id="Q9NZH7-2"/>
    <property type="protein sequence ID" value="ENSP00000328420.2"/>
    <property type="RefSeq nucleotide sequence ID" value="NM_173178.3"/>
    <property type="RefSeq protein sequence ID" value="NP_775270.1"/>
</dbReference>
<dbReference type="UCSC" id="uc002tiq.2">
    <molecule id="Q9NZH7-1"/>
    <property type="organism name" value="human"/>
</dbReference>
<dbReference type="AGR" id="HGNC:15564"/>
<dbReference type="CTD" id="27177"/>
<dbReference type="DisGeNET" id="27177"/>
<dbReference type="GeneCards" id="IL36B"/>
<dbReference type="HGNC" id="HGNC:15564">
    <property type="gene designation" value="IL36B"/>
</dbReference>
<dbReference type="HPA" id="ENSG00000136696">
    <property type="expression patterns" value="Group enriched (esophagus, lymphoid tissue, skin)"/>
</dbReference>
<dbReference type="MIM" id="605508">
    <property type="type" value="gene"/>
</dbReference>
<dbReference type="neXtProt" id="NX_Q9NZH7"/>
<dbReference type="OpenTargets" id="ENSG00000136696"/>
<dbReference type="PharmGKB" id="PA38391"/>
<dbReference type="VEuPathDB" id="HostDB:ENSG00000136696"/>
<dbReference type="eggNOG" id="ENOG502STX9">
    <property type="taxonomic scope" value="Eukaryota"/>
</dbReference>
<dbReference type="GeneTree" id="ENSGT00950000182943"/>
<dbReference type="HOGENOM" id="CLU_137451_0_0_1"/>
<dbReference type="InParanoid" id="Q9NZH7"/>
<dbReference type="OMA" id="YCTEIQG"/>
<dbReference type="OrthoDB" id="9442925at2759"/>
<dbReference type="PAN-GO" id="Q9NZH7">
    <property type="GO annotations" value="7 GO annotations based on evolutionary models"/>
</dbReference>
<dbReference type="PhylomeDB" id="Q9NZH7"/>
<dbReference type="PathwayCommons" id="Q9NZH7"/>
<dbReference type="Reactome" id="R-HSA-9014826">
    <property type="pathway name" value="Interleukin-36 pathway"/>
</dbReference>
<dbReference type="BioGRID-ORCS" id="27177">
    <property type="hits" value="12 hits in 1131 CRISPR screens"/>
</dbReference>
<dbReference type="GeneWiki" id="IL1F8"/>
<dbReference type="GenomeRNAi" id="27177"/>
<dbReference type="Pharos" id="Q9NZH7">
    <property type="development level" value="Tbio"/>
</dbReference>
<dbReference type="PRO" id="PR:Q9NZH7"/>
<dbReference type="Proteomes" id="UP000005640">
    <property type="component" value="Chromosome 2"/>
</dbReference>
<dbReference type="RNAct" id="Q9NZH7">
    <property type="molecule type" value="protein"/>
</dbReference>
<dbReference type="Bgee" id="ENSG00000136696">
    <property type="expression patterns" value="Expressed in skin of leg and 31 other cell types or tissues"/>
</dbReference>
<dbReference type="GO" id="GO:0005737">
    <property type="term" value="C:cytoplasm"/>
    <property type="evidence" value="ECO:0007669"/>
    <property type="project" value="UniProtKB-SubCell"/>
</dbReference>
<dbReference type="GO" id="GO:0005576">
    <property type="term" value="C:extracellular region"/>
    <property type="evidence" value="ECO:0000304"/>
    <property type="project" value="UniProtKB"/>
</dbReference>
<dbReference type="GO" id="GO:0005615">
    <property type="term" value="C:extracellular space"/>
    <property type="evidence" value="ECO:0000318"/>
    <property type="project" value="GO_Central"/>
</dbReference>
<dbReference type="GO" id="GO:0005125">
    <property type="term" value="F:cytokine activity"/>
    <property type="evidence" value="ECO:0000318"/>
    <property type="project" value="GO_Central"/>
</dbReference>
<dbReference type="GO" id="GO:0005149">
    <property type="term" value="F:interleukin-1 receptor binding"/>
    <property type="evidence" value="ECO:0000304"/>
    <property type="project" value="ProtInc"/>
</dbReference>
<dbReference type="GO" id="GO:0071222">
    <property type="term" value="P:cellular response to lipopolysaccharide"/>
    <property type="evidence" value="ECO:0000318"/>
    <property type="project" value="GO_Central"/>
</dbReference>
<dbReference type="GO" id="GO:0019221">
    <property type="term" value="P:cytokine-mediated signaling pathway"/>
    <property type="evidence" value="ECO:0000318"/>
    <property type="project" value="GO_Central"/>
</dbReference>
<dbReference type="GO" id="GO:0006955">
    <property type="term" value="P:immune response"/>
    <property type="evidence" value="ECO:0000318"/>
    <property type="project" value="GO_Central"/>
</dbReference>
<dbReference type="GO" id="GO:0006954">
    <property type="term" value="P:inflammatory response"/>
    <property type="evidence" value="ECO:0000318"/>
    <property type="project" value="GO_Central"/>
</dbReference>
<dbReference type="GO" id="GO:0045087">
    <property type="term" value="P:innate immune response"/>
    <property type="evidence" value="ECO:0007669"/>
    <property type="project" value="UniProtKB-KW"/>
</dbReference>
<dbReference type="GO" id="GO:0045582">
    <property type="term" value="P:positive regulation of T cell differentiation"/>
    <property type="evidence" value="ECO:0000318"/>
    <property type="project" value="GO_Central"/>
</dbReference>
<dbReference type="CDD" id="cd23300">
    <property type="entry name" value="beta-trefoil_IL36"/>
    <property type="match status" value="1"/>
</dbReference>
<dbReference type="Gene3D" id="2.80.10.50">
    <property type="match status" value="1"/>
</dbReference>
<dbReference type="InterPro" id="IPR000975">
    <property type="entry name" value="IL-1_fam"/>
</dbReference>
<dbReference type="InterPro" id="IPR008996">
    <property type="entry name" value="IL1/FGF"/>
</dbReference>
<dbReference type="PANTHER" id="PTHR10078">
    <property type="entry name" value="INTERLEUKIN-1 FAMILY MEMBER"/>
    <property type="match status" value="1"/>
</dbReference>
<dbReference type="PANTHER" id="PTHR10078:SF24">
    <property type="entry name" value="INTERLEUKIN-36 BETA"/>
    <property type="match status" value="1"/>
</dbReference>
<dbReference type="SUPFAM" id="SSF50353">
    <property type="entry name" value="Cytokine"/>
    <property type="match status" value="1"/>
</dbReference>
<comment type="function">
    <text evidence="1 2 3 4 5 6">Cytokine that binds to and signals through the IL1RL2/IL-36R receptor which in turn activates NF-kappa-B and MAPK signaling pathways in target cells linked to a pro-inflammatory response. Part of the IL-36 signaling system that is thought to be present in epithelial barriers and to take part in local inflammatory response; similar to the IL-1 system with which it shares the coreceptor IL1RAP. Stimulates production of interleukin-6 and interleukin-8 in synovial fibrobasts, articular chondrocytes and mature adipocytes. Induces expression of a number of antimicrobial peptides including beta-defensins 4 and 103 as well as a number of matrix metalloproteases. Seems to be involved in skin inflammatory response by acting on keratinocytes, dendritic cells and indirectly on T-cells to drive tissue infiltration, cell maturation and cell proliferation. In cultured keratinocytes induces the expression of macrophage, T-cell, and neutrophil chemokines, such as CCL3, CCL4, CCL5, CCL2, CCL17, CCL22, CL20, CCL5, CCL2, CCL17, CCL22, CXCL8, CCL20 and CXCL1, and the production of pro-inflammatory cytokines such as TNF-alpha, IL-8 and IL-6.</text>
</comment>
<comment type="subunit">
    <text evidence="7">Interacts with cargo receptor TMED10; the interaction mediates the translocation from the cytoplasm into the ERGIC (endoplasmic reticulum-Golgi intermediate compartment) and thereby secretion.</text>
</comment>
<comment type="subcellular location">
    <subcellularLocation>
        <location evidence="7">Cytoplasm</location>
    </subcellularLocation>
    <subcellularLocation>
        <location evidence="1">Secreted</location>
    </subcellularLocation>
    <text evidence="7">The secretion is dependent on protein unfolding and facilitated by the cargo receptor TMED10; it results in protein translocation from the cytoplasm into the ERGIC (endoplasmic reticulum-Golgi intermediate compartment) followed by vesicle entry and secretion.</text>
</comment>
<comment type="alternative products">
    <event type="alternative splicing"/>
    <isoform>
        <id>Q9NZH7-1</id>
        <name>1</name>
        <sequence type="displayed"/>
    </isoform>
    <isoform>
        <id>Q9NZH7-2</id>
        <name>2</name>
        <sequence type="described" ref="VSP_002657"/>
    </isoform>
</comment>
<comment type="tissue specificity">
    <text evidence="2 3">Expression at low levels in tonsil, bone marrow, heart, placenta, lung, testis and colon but not in any hematopoietic cell lines. Not detected in adipose tissue. Expressed at higher levels in psoriatic plaques than in symptomless psoriatic skin or healthy control skin. Increased levels are not detected in inflamed joint tissue.</text>
</comment>
<comment type="induction">
    <text evidence="1">By pro-inflammatory cytokines IL1A, IL1B and TNF in synovial fibroblasts. By IL1A and TNF in keratinocytes. Constitutive in articular chondrocytes.</text>
</comment>
<comment type="PTM">
    <text evidence="5">N-terminal truncation leads to a dramatic enhancement of its activity (&gt;1000-fold).</text>
</comment>
<comment type="similarity">
    <text evidence="11">Belongs to the IL-1 family.</text>
</comment>
<comment type="online information" name="Wikipedia">
    <link uri="https://en.wikipedia.org/wiki/Interleukin_1"/>
    <text>Interleukin-1 entry</text>
</comment>
<organism>
    <name type="scientific">Homo sapiens</name>
    <name type="common">Human</name>
    <dbReference type="NCBI Taxonomy" id="9606"/>
    <lineage>
        <taxon>Eukaryota</taxon>
        <taxon>Metazoa</taxon>
        <taxon>Chordata</taxon>
        <taxon>Craniata</taxon>
        <taxon>Vertebrata</taxon>
        <taxon>Euteleostomi</taxon>
        <taxon>Mammalia</taxon>
        <taxon>Eutheria</taxon>
        <taxon>Euarchontoglires</taxon>
        <taxon>Primates</taxon>
        <taxon>Haplorrhini</taxon>
        <taxon>Catarrhini</taxon>
        <taxon>Hominidae</taxon>
        <taxon>Homo</taxon>
    </lineage>
</organism>